<evidence type="ECO:0000250" key="1"/>
<evidence type="ECO:0000269" key="2">
    <source>
    </source>
</evidence>
<evidence type="ECO:0000269" key="3">
    <source>
    </source>
</evidence>
<evidence type="ECO:0000305" key="4"/>
<sequence>MAGATSATAAAGAFAAAKARGPAAACPWLVAAGGRRRSGVVRCDAGGDAQAASKAASITALEQFKISADRYMKEKSSIAVIGLSVHTAPVEMREKLAVAEELWPRAISELTSLNHIEEAAVLSTCNRMEIYVVALSWNRGIREVVDWMSKKSGIPASELREHLFMLRDSDATRHLFEVSAGLDSLVLGEGQILAQVKQVVRNGQNSGGLGKNIDRMFKDAITAGKRVRCETNISAGAVSVSSAAVELAMMKLPKSECLSARMLLIGAGKMGKLVVKHLIAKGCKKVVVVNRSVERVDAIREEMKDIEIVYRPLTEMYEAAADADVVFTSTASESLLFTKEHAEVLPPISLAMGGVRLFVDISVPRNVGACLSEVEHARVYNVDDLKEVVEANKEDRVRKAMEAQTIITQELKRFEAWRDSLETVPTIKKLRSYADRIRASELEKCLQKIGEDNLNKKMRRSIEELSTGIVNKLLHGPLQHLRCDGSDSRTLDETLENMHALNRMFSLDTEKAVLEQKIKAKVEKTQS</sequence>
<protein>
    <recommendedName>
        <fullName>Glutamyl-tRNA reductase 1, chloroplastic</fullName>
        <shortName>GluTR</shortName>
        <ecNumber>1.2.1.70</ecNumber>
    </recommendedName>
</protein>
<comment type="function">
    <text evidence="3">Catalyzes the NADPH-dependent reduction of glutamyl-tRNA(Glu) to glutamate 1-semialdehyde (GSA).</text>
</comment>
<comment type="catalytic activity">
    <reaction>
        <text>(S)-4-amino-5-oxopentanoate + tRNA(Glu) + NADP(+) = L-glutamyl-tRNA(Glu) + NADPH + H(+)</text>
        <dbReference type="Rhea" id="RHEA:12344"/>
        <dbReference type="Rhea" id="RHEA-COMP:9663"/>
        <dbReference type="Rhea" id="RHEA-COMP:9680"/>
        <dbReference type="ChEBI" id="CHEBI:15378"/>
        <dbReference type="ChEBI" id="CHEBI:57501"/>
        <dbReference type="ChEBI" id="CHEBI:57783"/>
        <dbReference type="ChEBI" id="CHEBI:58349"/>
        <dbReference type="ChEBI" id="CHEBI:78442"/>
        <dbReference type="ChEBI" id="CHEBI:78520"/>
        <dbReference type="EC" id="1.2.1.70"/>
    </reaction>
</comment>
<comment type="pathway">
    <text>Porphyrin-containing compound metabolism; protoporphyrin-IX biosynthesis; 5-aminolevulinate from L-glutamyl-tRNA(Glu): step 1/2.</text>
</comment>
<comment type="subunit">
    <text evidence="3">Homodimer.</text>
</comment>
<comment type="subcellular location">
    <subcellularLocation>
        <location>Plastid</location>
        <location>Chloroplast</location>
    </subcellularLocation>
</comment>
<comment type="miscellaneous">
    <text>Was shown to bind heme, but the precise role of heme is unclear.</text>
</comment>
<comment type="miscellaneous">
    <text evidence="1">During catalysis, the active site Cys acts as a nucleophile attacking the alpha-carbonyl group of tRNA-bound glutamate with the formation of a thioester intermediate between enzyme and glutamate, and the concomitant release of tRNA(Glu). The thioester intermediate is finally reduced by direct hydride transfer from NADPH, to form the product GSA (By similarity).</text>
</comment>
<comment type="similarity">
    <text evidence="4">Belongs to the glutamyl-tRNA reductase family.</text>
</comment>
<comment type="sequence caution" evidence="4">
    <conflict type="erroneous initiation">
        <sequence resource="EMBL-CDS" id="CAA60054"/>
    </conflict>
</comment>
<feature type="transit peptide" description="Chloroplast" evidence="2">
    <location>
        <begin position="1"/>
        <end position="43"/>
    </location>
</feature>
<feature type="chain" id="PRO_0000013311" description="Glutamyl-tRNA reductase 1, chloroplastic">
    <location>
        <begin position="44"/>
        <end position="527"/>
    </location>
</feature>
<feature type="active site" description="Nucleophile" evidence="1">
    <location>
        <position position="125"/>
    </location>
</feature>
<feature type="binding site" evidence="1">
    <location>
        <begin position="124"/>
        <end position="127"/>
    </location>
    <ligand>
        <name>substrate</name>
    </ligand>
</feature>
<feature type="binding site" evidence="1">
    <location>
        <position position="184"/>
    </location>
    <ligand>
        <name>substrate</name>
    </ligand>
</feature>
<feature type="binding site" evidence="1">
    <location>
        <begin position="189"/>
        <end position="191"/>
    </location>
    <ligand>
        <name>substrate</name>
    </ligand>
</feature>
<feature type="binding site" evidence="1">
    <location>
        <position position="195"/>
    </location>
    <ligand>
        <name>substrate</name>
    </ligand>
</feature>
<feature type="binding site" evidence="1">
    <location>
        <begin position="266"/>
        <end position="271"/>
    </location>
    <ligand>
        <name>NADP(+)</name>
        <dbReference type="ChEBI" id="CHEBI:58349"/>
    </ligand>
</feature>
<feature type="site" description="Important for activity" evidence="1">
    <location>
        <position position="174"/>
    </location>
</feature>
<reference key="1">
    <citation type="journal article" date="1996" name="Plant J.">
        <title>Members of a low-copy number gene family encoding glutamyl-tRNA reductase are differentially expressed in barley.</title>
        <authorList>
            <person name="Bougri O."/>
            <person name="Grimm B."/>
        </authorList>
    </citation>
    <scope>NUCLEOTIDE SEQUENCE [MRNA]</scope>
    <source>
        <strain>cv. Klages</strain>
    </source>
</reference>
<reference key="2">
    <citation type="journal article" date="1994" name="Eur. J. Biochem.">
        <title>Purification and partial characterisation of barley glutamyl-tRNA(Glu) reductase, the enzyme that directs glutamate to chlorophyll biosynthesis.</title>
        <authorList>
            <person name="Pontoppidan B."/>
            <person name="Kannangara C.G."/>
        </authorList>
    </citation>
    <scope>PROTEIN SEQUENCE OF 44-65</scope>
    <scope>CHARACTERIZATION</scope>
</reference>
<reference key="3">
    <citation type="journal article" date="1996" name="Proc. Natl. Acad. Sci. U.S.A.">
        <title>Expression of catalytically active barley glutamyl tRNAGlu reductase in Escherichia coli as a fusion protein with glutathione S-transferase.</title>
        <authorList>
            <person name="Vothknecht U.C."/>
            <person name="Kannangara C.G."/>
            <person name="von Wettstein D."/>
        </authorList>
    </citation>
    <scope>FUNCTION</scope>
    <scope>CHARACTERIZATION</scope>
    <scope>HEME BINDING</scope>
    <scope>SUBUNIT</scope>
</reference>
<reference key="4">
    <citation type="journal article" date="1999" name="Proteins">
        <title>Predicted structure and fold recognition for the glutamyl tRNA reductase family of proteins.</title>
        <authorList>
            <person name="Brody S.S."/>
            <person name="Gough S.P."/>
            <person name="Kannangara C.G."/>
        </authorList>
    </citation>
    <scope>3D-STRUCTURE MODELING OF 76-460</scope>
</reference>
<dbReference type="EC" id="1.2.1.70"/>
<dbReference type="EMBL" id="X92403">
    <property type="protein sequence ID" value="CAA63140.1"/>
    <property type="molecule type" value="mRNA"/>
</dbReference>
<dbReference type="EMBL" id="X86101">
    <property type="protein sequence ID" value="CAA60054.1"/>
    <property type="status" value="ALT_INIT"/>
    <property type="molecule type" value="mRNA"/>
</dbReference>
<dbReference type="PIR" id="T05732">
    <property type="entry name" value="T05732"/>
</dbReference>
<dbReference type="SMR" id="Q42843"/>
<dbReference type="KEGG" id="ag:CAA63140"/>
<dbReference type="BRENDA" id="1.2.1.70">
    <property type="organism ID" value="2687"/>
</dbReference>
<dbReference type="UniPathway" id="UPA00251">
    <property type="reaction ID" value="UER00316"/>
</dbReference>
<dbReference type="ExpressionAtlas" id="Q42843">
    <property type="expression patterns" value="baseline"/>
</dbReference>
<dbReference type="GO" id="GO:0009507">
    <property type="term" value="C:chloroplast"/>
    <property type="evidence" value="ECO:0007669"/>
    <property type="project" value="UniProtKB-SubCell"/>
</dbReference>
<dbReference type="GO" id="GO:0008883">
    <property type="term" value="F:glutamyl-tRNA reductase activity"/>
    <property type="evidence" value="ECO:0007669"/>
    <property type="project" value="UniProtKB-EC"/>
</dbReference>
<dbReference type="GO" id="GO:0050661">
    <property type="term" value="F:NADP binding"/>
    <property type="evidence" value="ECO:0007669"/>
    <property type="project" value="InterPro"/>
</dbReference>
<dbReference type="GO" id="GO:0015995">
    <property type="term" value="P:chlorophyll biosynthetic process"/>
    <property type="evidence" value="ECO:0007669"/>
    <property type="project" value="UniProtKB-KW"/>
</dbReference>
<dbReference type="GO" id="GO:0006782">
    <property type="term" value="P:protoporphyrinogen IX biosynthetic process"/>
    <property type="evidence" value="ECO:0007669"/>
    <property type="project" value="UniProtKB-UniPathway"/>
</dbReference>
<dbReference type="CDD" id="cd05213">
    <property type="entry name" value="NAD_bind_Glutamyl_tRNA_reduct"/>
    <property type="match status" value="1"/>
</dbReference>
<dbReference type="FunFam" id="3.30.460.30:FF:000001">
    <property type="entry name" value="Glutamyl-tRNA reductase"/>
    <property type="match status" value="1"/>
</dbReference>
<dbReference type="FunFam" id="3.40.50.720:FF:000031">
    <property type="entry name" value="Glutamyl-tRNA reductase"/>
    <property type="match status" value="1"/>
</dbReference>
<dbReference type="Gene3D" id="3.30.460.30">
    <property type="entry name" value="Glutamyl-tRNA reductase, N-terminal domain"/>
    <property type="match status" value="1"/>
</dbReference>
<dbReference type="Gene3D" id="3.40.50.720">
    <property type="entry name" value="NAD(P)-binding Rossmann-like Domain"/>
    <property type="match status" value="1"/>
</dbReference>
<dbReference type="HAMAP" id="MF_00087">
    <property type="entry name" value="Glu_tRNA_reductase"/>
    <property type="match status" value="1"/>
</dbReference>
<dbReference type="InterPro" id="IPR000343">
    <property type="entry name" value="4pyrrol_synth_GluRdtase"/>
</dbReference>
<dbReference type="InterPro" id="IPR015896">
    <property type="entry name" value="4pyrrol_synth_GluRdtase_dimer"/>
</dbReference>
<dbReference type="InterPro" id="IPR015895">
    <property type="entry name" value="4pyrrol_synth_GluRdtase_N"/>
</dbReference>
<dbReference type="InterPro" id="IPR018214">
    <property type="entry name" value="GluRdtase_CS"/>
</dbReference>
<dbReference type="InterPro" id="IPR036453">
    <property type="entry name" value="GluRdtase_dimer_dom_sf"/>
</dbReference>
<dbReference type="InterPro" id="IPR036343">
    <property type="entry name" value="GluRdtase_N_sf"/>
</dbReference>
<dbReference type="InterPro" id="IPR036291">
    <property type="entry name" value="NAD(P)-bd_dom_sf"/>
</dbReference>
<dbReference type="InterPro" id="IPR006151">
    <property type="entry name" value="Shikm_DH/Glu-tRNA_Rdtase"/>
</dbReference>
<dbReference type="NCBIfam" id="TIGR01035">
    <property type="entry name" value="hemA"/>
    <property type="match status" value="1"/>
</dbReference>
<dbReference type="PANTHER" id="PTHR43120">
    <property type="entry name" value="GLUTAMYL-TRNA REDUCTASE 1, CHLOROPLASTIC"/>
    <property type="match status" value="1"/>
</dbReference>
<dbReference type="PANTHER" id="PTHR43120:SF1">
    <property type="entry name" value="GLUTAMYL-TRNA REDUCTASE 1, CHLOROPLASTIC"/>
    <property type="match status" value="1"/>
</dbReference>
<dbReference type="Pfam" id="PF00745">
    <property type="entry name" value="GlutR_dimer"/>
    <property type="match status" value="1"/>
</dbReference>
<dbReference type="Pfam" id="PF05201">
    <property type="entry name" value="GlutR_N"/>
    <property type="match status" value="1"/>
</dbReference>
<dbReference type="Pfam" id="PF01488">
    <property type="entry name" value="Shikimate_DH"/>
    <property type="match status" value="1"/>
</dbReference>
<dbReference type="SUPFAM" id="SSF69742">
    <property type="entry name" value="Glutamyl tRNA-reductase catalytic, N-terminal domain"/>
    <property type="match status" value="1"/>
</dbReference>
<dbReference type="SUPFAM" id="SSF69075">
    <property type="entry name" value="Glutamyl tRNA-reductase dimerization domain"/>
    <property type="match status" value="1"/>
</dbReference>
<dbReference type="SUPFAM" id="SSF51735">
    <property type="entry name" value="NAD(P)-binding Rossmann-fold domains"/>
    <property type="match status" value="1"/>
</dbReference>
<dbReference type="PROSITE" id="PS00747">
    <property type="entry name" value="GLUTR"/>
    <property type="match status" value="1"/>
</dbReference>
<accession>Q42843</accession>
<accession>Q42844</accession>
<keyword id="KW-0149">Chlorophyll biosynthesis</keyword>
<keyword id="KW-0150">Chloroplast</keyword>
<keyword id="KW-0903">Direct protein sequencing</keyword>
<keyword id="KW-0521">NADP</keyword>
<keyword id="KW-0560">Oxidoreductase</keyword>
<keyword id="KW-0934">Plastid</keyword>
<keyword id="KW-0627">Porphyrin biosynthesis</keyword>
<keyword id="KW-0809">Transit peptide</keyword>
<name>HEM11_HORVU</name>
<organism>
    <name type="scientific">Hordeum vulgare</name>
    <name type="common">Barley</name>
    <dbReference type="NCBI Taxonomy" id="4513"/>
    <lineage>
        <taxon>Eukaryota</taxon>
        <taxon>Viridiplantae</taxon>
        <taxon>Streptophyta</taxon>
        <taxon>Embryophyta</taxon>
        <taxon>Tracheophyta</taxon>
        <taxon>Spermatophyta</taxon>
        <taxon>Magnoliopsida</taxon>
        <taxon>Liliopsida</taxon>
        <taxon>Poales</taxon>
        <taxon>Poaceae</taxon>
        <taxon>BOP clade</taxon>
        <taxon>Pooideae</taxon>
        <taxon>Triticodae</taxon>
        <taxon>Triticeae</taxon>
        <taxon>Hordeinae</taxon>
        <taxon>Hordeum</taxon>
    </lineage>
</organism>
<gene>
    <name type="primary">HEMA1</name>
</gene>
<proteinExistence type="evidence at protein level"/>